<evidence type="ECO:0000250" key="1"/>
<evidence type="ECO:0000255" key="2">
    <source>
        <dbReference type="HAMAP-Rule" id="MF_00100"/>
    </source>
</evidence>
<evidence type="ECO:0000256" key="3">
    <source>
        <dbReference type="SAM" id="MobiDB-lite"/>
    </source>
</evidence>
<gene>
    <name evidence="2" type="primary">infB</name>
    <name type="ordered locus">cauri_1530</name>
</gene>
<reference key="1">
    <citation type="journal article" date="2010" name="BMC Genomics">
        <title>Complete genome sequence and lifestyle of black-pigmented Corynebacterium aurimucosum ATCC 700975 (formerly C. nigricans CN-1) isolated from a vaginal swab of a woman with spontaneous abortion.</title>
        <authorList>
            <person name="Trost E."/>
            <person name="Gotker S."/>
            <person name="Schneider J."/>
            <person name="Schneiker-Bekel S."/>
            <person name="Szczepanowski R."/>
            <person name="Tilker A."/>
            <person name="Viehoever P."/>
            <person name="Arnold W."/>
            <person name="Bekel T."/>
            <person name="Blom J."/>
            <person name="Gartemann K.H."/>
            <person name="Linke B."/>
            <person name="Goesmann A."/>
            <person name="Puhler A."/>
            <person name="Shukla S.K."/>
            <person name="Tauch A."/>
        </authorList>
    </citation>
    <scope>NUCLEOTIDE SEQUENCE [LARGE SCALE GENOMIC DNA]</scope>
    <source>
        <strain>ATCC 700975 / DSM 44827 / CIP 107346 / CN-1</strain>
    </source>
</reference>
<comment type="function">
    <text evidence="2">One of the essential components for the initiation of protein synthesis. Protects formylmethionyl-tRNA from spontaneous hydrolysis and promotes its binding to the 30S ribosomal subunits. Also involved in the hydrolysis of GTP during the formation of the 70S ribosomal complex.</text>
</comment>
<comment type="subcellular location">
    <subcellularLocation>
        <location evidence="2">Cytoplasm</location>
    </subcellularLocation>
</comment>
<comment type="similarity">
    <text evidence="2">Belongs to the TRAFAC class translation factor GTPase superfamily. Classic translation factor GTPase family. IF-2 subfamily.</text>
</comment>
<proteinExistence type="inferred from homology"/>
<name>IF2_CORA7</name>
<accession>C3PH19</accession>
<sequence length="905" mass="94792">MPGKLRVHELAKQLGVTSKELLATLKEQGEFVKTASSTIEPPVIKKMRAHYEAKGGEDKAAEKNAPAATPASASKKPTEKKPATAAKPGPKPSAAPKPGAAPKPGGAPKPGGAPKPGATPKPGGAPKPGAQRKNTEKGSERAVTPRSMPKPGGTRRVANNPFSTGSSSDRPSPGPRPGGTKGQRSAGKPGDNRGGKGGARPQGDGNRSGGRRPSPAMMPSHPNPASMPSKAAGSGGGGRGRGGRGGGPGHGGPGHGGFRGRGGRRGGTAGAFGRPGGAPRRGKKSKRQKRHEFEEQQKHEVGGVRLPDGGGKVVRLRRGASLADFAEKIGADPAALVQALFNLGEMVTATASVSEDTLQLLGSEINYEVQVVSPEDEDRELLESFDLQFGEDEGGEEALEKRPPVVTVMGHVDHGKTRLLDTIRKTNEGAGEAGGITQGIGAYQTTVDLEDGPRTITFLDTPGHEAFTAMRARGAKSTDLAILVVAADDGVMPQTIEAINHAKAADIPVVVAVNKIDKPEASPDKIRGQLTEYGLVPEEYGGDTMFVDISAKNNINIDDLLEAVILTADAALELTANPDMDAQGSAIEAHLDRGRGPVATVIIQRGTLRIGDSIVVGDAHGRVRRMLDEFGNDVEEAGPSRPVQVQGLNGVPGAGDNLLVVEDDRVARQIAAQRDARKRSALQAKARKRVSLEDLDAVLKETSTLNLILKGDNAGSVEALEDALLDIEVDDEVQLNIIDRGVGAVTQTNVSLAAASDAIIIAFNVRAEGKATEEANAEGVDIRYYTVIYRAIEEVEAALKGMLKPIYEERDTGAAEIRALFKSSAVGTIAGCMVTEGKVKRNGKVRLVRDGNVITSDAKIESLRHEKDDANEINAGYECGMVLSYPDIQVGDIIQAYEEVEVPRD</sequence>
<dbReference type="EMBL" id="CP001601">
    <property type="protein sequence ID" value="ACP33123.1"/>
    <property type="molecule type" value="Genomic_DNA"/>
</dbReference>
<dbReference type="RefSeq" id="WP_010190332.1">
    <property type="nucleotide sequence ID" value="NC_012590.1"/>
</dbReference>
<dbReference type="SMR" id="C3PH19"/>
<dbReference type="STRING" id="548476.cauri_1530"/>
<dbReference type="GeneID" id="31924160"/>
<dbReference type="KEGG" id="car:cauri_1530"/>
<dbReference type="eggNOG" id="COG0532">
    <property type="taxonomic scope" value="Bacteria"/>
</dbReference>
<dbReference type="HOGENOM" id="CLU_006301_9_0_11"/>
<dbReference type="OrthoDB" id="9811804at2"/>
<dbReference type="Proteomes" id="UP000002077">
    <property type="component" value="Chromosome"/>
</dbReference>
<dbReference type="GO" id="GO:0005829">
    <property type="term" value="C:cytosol"/>
    <property type="evidence" value="ECO:0007669"/>
    <property type="project" value="TreeGrafter"/>
</dbReference>
<dbReference type="GO" id="GO:0005525">
    <property type="term" value="F:GTP binding"/>
    <property type="evidence" value="ECO:0007669"/>
    <property type="project" value="UniProtKB-KW"/>
</dbReference>
<dbReference type="GO" id="GO:0003924">
    <property type="term" value="F:GTPase activity"/>
    <property type="evidence" value="ECO:0007669"/>
    <property type="project" value="UniProtKB-UniRule"/>
</dbReference>
<dbReference type="GO" id="GO:0003743">
    <property type="term" value="F:translation initiation factor activity"/>
    <property type="evidence" value="ECO:0007669"/>
    <property type="project" value="UniProtKB-UniRule"/>
</dbReference>
<dbReference type="CDD" id="cd01887">
    <property type="entry name" value="IF2_eIF5B"/>
    <property type="match status" value="1"/>
</dbReference>
<dbReference type="CDD" id="cd03702">
    <property type="entry name" value="IF2_mtIF2_II"/>
    <property type="match status" value="1"/>
</dbReference>
<dbReference type="CDD" id="cd03692">
    <property type="entry name" value="mtIF2_IVc"/>
    <property type="match status" value="1"/>
</dbReference>
<dbReference type="FunFam" id="2.40.30.10:FF:000007">
    <property type="entry name" value="Translation initiation factor IF-2"/>
    <property type="match status" value="1"/>
</dbReference>
<dbReference type="FunFam" id="2.40.30.10:FF:000008">
    <property type="entry name" value="Translation initiation factor IF-2"/>
    <property type="match status" value="1"/>
</dbReference>
<dbReference type="FunFam" id="3.40.50.10050:FF:000001">
    <property type="entry name" value="Translation initiation factor IF-2"/>
    <property type="match status" value="1"/>
</dbReference>
<dbReference type="FunFam" id="3.40.50.300:FF:000019">
    <property type="entry name" value="Translation initiation factor IF-2"/>
    <property type="match status" value="1"/>
</dbReference>
<dbReference type="Gene3D" id="1.10.10.2480">
    <property type="match status" value="1"/>
</dbReference>
<dbReference type="Gene3D" id="3.40.50.300">
    <property type="entry name" value="P-loop containing nucleotide triphosphate hydrolases"/>
    <property type="match status" value="1"/>
</dbReference>
<dbReference type="Gene3D" id="2.40.30.10">
    <property type="entry name" value="Translation factors"/>
    <property type="match status" value="2"/>
</dbReference>
<dbReference type="Gene3D" id="3.40.50.10050">
    <property type="entry name" value="Translation initiation factor IF- 2, domain 3"/>
    <property type="match status" value="1"/>
</dbReference>
<dbReference type="HAMAP" id="MF_00100_B">
    <property type="entry name" value="IF_2_B"/>
    <property type="match status" value="1"/>
</dbReference>
<dbReference type="InterPro" id="IPR053905">
    <property type="entry name" value="EF-G-like_DII"/>
</dbReference>
<dbReference type="InterPro" id="IPR044145">
    <property type="entry name" value="IF2_II"/>
</dbReference>
<dbReference type="InterPro" id="IPR006847">
    <property type="entry name" value="IF2_N"/>
</dbReference>
<dbReference type="InterPro" id="IPR027417">
    <property type="entry name" value="P-loop_NTPase"/>
</dbReference>
<dbReference type="InterPro" id="IPR005225">
    <property type="entry name" value="Small_GTP-bd"/>
</dbReference>
<dbReference type="InterPro" id="IPR000795">
    <property type="entry name" value="T_Tr_GTP-bd_dom"/>
</dbReference>
<dbReference type="InterPro" id="IPR000178">
    <property type="entry name" value="TF_IF2_bacterial-like"/>
</dbReference>
<dbReference type="InterPro" id="IPR015760">
    <property type="entry name" value="TIF_IF2"/>
</dbReference>
<dbReference type="InterPro" id="IPR023115">
    <property type="entry name" value="TIF_IF2_dom3"/>
</dbReference>
<dbReference type="InterPro" id="IPR036925">
    <property type="entry name" value="TIF_IF2_dom3_sf"/>
</dbReference>
<dbReference type="InterPro" id="IPR009000">
    <property type="entry name" value="Transl_B-barrel_sf"/>
</dbReference>
<dbReference type="NCBIfam" id="TIGR00487">
    <property type="entry name" value="IF-2"/>
    <property type="match status" value="1"/>
</dbReference>
<dbReference type="NCBIfam" id="TIGR00231">
    <property type="entry name" value="small_GTP"/>
    <property type="match status" value="1"/>
</dbReference>
<dbReference type="PANTHER" id="PTHR43381:SF5">
    <property type="entry name" value="TR-TYPE G DOMAIN-CONTAINING PROTEIN"/>
    <property type="match status" value="1"/>
</dbReference>
<dbReference type="PANTHER" id="PTHR43381">
    <property type="entry name" value="TRANSLATION INITIATION FACTOR IF-2-RELATED"/>
    <property type="match status" value="1"/>
</dbReference>
<dbReference type="Pfam" id="PF22042">
    <property type="entry name" value="EF-G_D2"/>
    <property type="match status" value="1"/>
</dbReference>
<dbReference type="Pfam" id="PF00009">
    <property type="entry name" value="GTP_EFTU"/>
    <property type="match status" value="1"/>
</dbReference>
<dbReference type="Pfam" id="PF11987">
    <property type="entry name" value="IF-2"/>
    <property type="match status" value="1"/>
</dbReference>
<dbReference type="Pfam" id="PF04760">
    <property type="entry name" value="IF2_N"/>
    <property type="match status" value="2"/>
</dbReference>
<dbReference type="PRINTS" id="PR00315">
    <property type="entry name" value="ELONGATNFCT"/>
</dbReference>
<dbReference type="SMART" id="SM00173">
    <property type="entry name" value="RAS"/>
    <property type="match status" value="1"/>
</dbReference>
<dbReference type="SUPFAM" id="SSF52156">
    <property type="entry name" value="Initiation factor IF2/eIF5b, domain 3"/>
    <property type="match status" value="1"/>
</dbReference>
<dbReference type="SUPFAM" id="SSF52540">
    <property type="entry name" value="P-loop containing nucleoside triphosphate hydrolases"/>
    <property type="match status" value="1"/>
</dbReference>
<dbReference type="SUPFAM" id="SSF50447">
    <property type="entry name" value="Translation proteins"/>
    <property type="match status" value="2"/>
</dbReference>
<dbReference type="PROSITE" id="PS51722">
    <property type="entry name" value="G_TR_2"/>
    <property type="match status" value="1"/>
</dbReference>
<feature type="chain" id="PRO_1000118757" description="Translation initiation factor IF-2">
    <location>
        <begin position="1"/>
        <end position="905"/>
    </location>
</feature>
<feature type="domain" description="tr-type G">
    <location>
        <begin position="401"/>
        <end position="575"/>
    </location>
</feature>
<feature type="region of interest" description="Disordered" evidence="3">
    <location>
        <begin position="50"/>
        <end position="306"/>
    </location>
</feature>
<feature type="region of interest" description="G1" evidence="1">
    <location>
        <begin position="410"/>
        <end position="417"/>
    </location>
</feature>
<feature type="region of interest" description="G2" evidence="1">
    <location>
        <begin position="435"/>
        <end position="439"/>
    </location>
</feature>
<feature type="region of interest" description="G3" evidence="1">
    <location>
        <begin position="460"/>
        <end position="463"/>
    </location>
</feature>
<feature type="region of interest" description="G4" evidence="1">
    <location>
        <begin position="514"/>
        <end position="517"/>
    </location>
</feature>
<feature type="region of interest" description="G5" evidence="1">
    <location>
        <begin position="550"/>
        <end position="552"/>
    </location>
</feature>
<feature type="compositionally biased region" description="Basic and acidic residues" evidence="3">
    <location>
        <begin position="50"/>
        <end position="62"/>
    </location>
</feature>
<feature type="compositionally biased region" description="Low complexity" evidence="3">
    <location>
        <begin position="63"/>
        <end position="75"/>
    </location>
</feature>
<feature type="compositionally biased region" description="Pro residues" evidence="3">
    <location>
        <begin position="89"/>
        <end position="125"/>
    </location>
</feature>
<feature type="compositionally biased region" description="Low complexity" evidence="3">
    <location>
        <begin position="161"/>
        <end position="171"/>
    </location>
</feature>
<feature type="compositionally biased region" description="Gly residues" evidence="3">
    <location>
        <begin position="233"/>
        <end position="276"/>
    </location>
</feature>
<feature type="compositionally biased region" description="Basic residues" evidence="3">
    <location>
        <begin position="280"/>
        <end position="290"/>
    </location>
</feature>
<feature type="compositionally biased region" description="Basic and acidic residues" evidence="3">
    <location>
        <begin position="291"/>
        <end position="302"/>
    </location>
</feature>
<feature type="binding site" evidence="2">
    <location>
        <begin position="410"/>
        <end position="417"/>
    </location>
    <ligand>
        <name>GTP</name>
        <dbReference type="ChEBI" id="CHEBI:37565"/>
    </ligand>
</feature>
<feature type="binding site" evidence="2">
    <location>
        <begin position="460"/>
        <end position="464"/>
    </location>
    <ligand>
        <name>GTP</name>
        <dbReference type="ChEBI" id="CHEBI:37565"/>
    </ligand>
</feature>
<feature type="binding site" evidence="2">
    <location>
        <begin position="514"/>
        <end position="517"/>
    </location>
    <ligand>
        <name>GTP</name>
        <dbReference type="ChEBI" id="CHEBI:37565"/>
    </ligand>
</feature>
<organism>
    <name type="scientific">Corynebacterium aurimucosum (strain ATCC 700975 / DSM 44827 / CIP 107346 / CN-1)</name>
    <name type="common">Corynebacterium nigricans</name>
    <dbReference type="NCBI Taxonomy" id="548476"/>
    <lineage>
        <taxon>Bacteria</taxon>
        <taxon>Bacillati</taxon>
        <taxon>Actinomycetota</taxon>
        <taxon>Actinomycetes</taxon>
        <taxon>Mycobacteriales</taxon>
        <taxon>Corynebacteriaceae</taxon>
        <taxon>Corynebacterium</taxon>
    </lineage>
</organism>
<protein>
    <recommendedName>
        <fullName evidence="2">Translation initiation factor IF-2</fullName>
    </recommendedName>
</protein>
<keyword id="KW-0963">Cytoplasm</keyword>
<keyword id="KW-0342">GTP-binding</keyword>
<keyword id="KW-0396">Initiation factor</keyword>
<keyword id="KW-0547">Nucleotide-binding</keyword>
<keyword id="KW-0648">Protein biosynthesis</keyword>
<keyword id="KW-1185">Reference proteome</keyword>